<evidence type="ECO:0000255" key="1">
    <source>
        <dbReference type="HAMAP-Rule" id="MF_01051"/>
    </source>
</evidence>
<protein>
    <recommendedName>
        <fullName evidence="1">Carnitinyl-CoA dehydratase</fullName>
        <ecNumber evidence="1">4.2.1.149</ecNumber>
    </recommendedName>
    <alternativeName>
        <fullName evidence="1">Crotonobetainyl-CoA hydratase</fullName>
    </alternativeName>
</protein>
<gene>
    <name evidence="1" type="primary">caiD</name>
    <name type="ordered locus">PMI2658</name>
</gene>
<organism>
    <name type="scientific">Proteus mirabilis (strain HI4320)</name>
    <dbReference type="NCBI Taxonomy" id="529507"/>
    <lineage>
        <taxon>Bacteria</taxon>
        <taxon>Pseudomonadati</taxon>
        <taxon>Pseudomonadota</taxon>
        <taxon>Gammaproteobacteria</taxon>
        <taxon>Enterobacterales</taxon>
        <taxon>Morganellaceae</taxon>
        <taxon>Proteus</taxon>
    </lineage>
</organism>
<name>CAID_PROMH</name>
<dbReference type="EC" id="4.2.1.149" evidence="1"/>
<dbReference type="EMBL" id="AM942759">
    <property type="protein sequence ID" value="CAR45238.1"/>
    <property type="molecule type" value="Genomic_DNA"/>
</dbReference>
<dbReference type="RefSeq" id="WP_012368456.1">
    <property type="nucleotide sequence ID" value="NC_010554.1"/>
</dbReference>
<dbReference type="SMR" id="B4EY26"/>
<dbReference type="EnsemblBacteria" id="CAR45238">
    <property type="protein sequence ID" value="CAR45238"/>
    <property type="gene ID" value="PMI2658"/>
</dbReference>
<dbReference type="GeneID" id="6802713"/>
<dbReference type="KEGG" id="pmr:PMI2658"/>
<dbReference type="PATRIC" id="fig|529507.6.peg.2586"/>
<dbReference type="eggNOG" id="COG1024">
    <property type="taxonomic scope" value="Bacteria"/>
</dbReference>
<dbReference type="HOGENOM" id="CLU_009834_7_6_6"/>
<dbReference type="UniPathway" id="UPA00117"/>
<dbReference type="Proteomes" id="UP000008319">
    <property type="component" value="Chromosome"/>
</dbReference>
<dbReference type="GO" id="GO:0016836">
    <property type="term" value="F:hydro-lyase activity"/>
    <property type="evidence" value="ECO:0007669"/>
    <property type="project" value="UniProtKB-UniRule"/>
</dbReference>
<dbReference type="GO" id="GO:0008735">
    <property type="term" value="F:L-carnitine CoA-transferase activity"/>
    <property type="evidence" value="ECO:0007669"/>
    <property type="project" value="RHEA"/>
</dbReference>
<dbReference type="GO" id="GO:0009437">
    <property type="term" value="P:carnitine metabolic process"/>
    <property type="evidence" value="ECO:0007669"/>
    <property type="project" value="UniProtKB-UniRule"/>
</dbReference>
<dbReference type="GO" id="GO:0006635">
    <property type="term" value="P:fatty acid beta-oxidation"/>
    <property type="evidence" value="ECO:0007669"/>
    <property type="project" value="TreeGrafter"/>
</dbReference>
<dbReference type="CDD" id="cd06558">
    <property type="entry name" value="crotonase-like"/>
    <property type="match status" value="1"/>
</dbReference>
<dbReference type="FunFam" id="1.10.12.10:FF:000005">
    <property type="entry name" value="Carnitinyl-CoA dehydratase"/>
    <property type="match status" value="1"/>
</dbReference>
<dbReference type="FunFam" id="3.90.226.10:FF:000009">
    <property type="entry name" value="Carnitinyl-CoA dehydratase"/>
    <property type="match status" value="1"/>
</dbReference>
<dbReference type="Gene3D" id="3.90.226.10">
    <property type="entry name" value="2-enoyl-CoA Hydratase, Chain A, domain 1"/>
    <property type="match status" value="1"/>
</dbReference>
<dbReference type="Gene3D" id="1.10.12.10">
    <property type="entry name" value="Lyase 2-enoyl-coa Hydratase, Chain A, domain 2"/>
    <property type="match status" value="1"/>
</dbReference>
<dbReference type="HAMAP" id="MF_01051">
    <property type="entry name" value="CaiD"/>
    <property type="match status" value="1"/>
</dbReference>
<dbReference type="InterPro" id="IPR022852">
    <property type="entry name" value="Carnitinyl_CoA_dehydratase"/>
</dbReference>
<dbReference type="InterPro" id="IPR029045">
    <property type="entry name" value="ClpP/crotonase-like_dom_sf"/>
</dbReference>
<dbReference type="InterPro" id="IPR018376">
    <property type="entry name" value="Enoyl-CoA_hyd/isom_CS"/>
</dbReference>
<dbReference type="InterPro" id="IPR001753">
    <property type="entry name" value="Enoyl-CoA_hydra/iso"/>
</dbReference>
<dbReference type="InterPro" id="IPR014748">
    <property type="entry name" value="Enoyl-CoA_hydra_C"/>
</dbReference>
<dbReference type="NCBIfam" id="NF002936">
    <property type="entry name" value="PRK03580.1"/>
    <property type="match status" value="1"/>
</dbReference>
<dbReference type="PANTHER" id="PTHR11941:SF54">
    <property type="entry name" value="ENOYL-COA HYDRATASE, MITOCHONDRIAL"/>
    <property type="match status" value="1"/>
</dbReference>
<dbReference type="PANTHER" id="PTHR11941">
    <property type="entry name" value="ENOYL-COA HYDRATASE-RELATED"/>
    <property type="match status" value="1"/>
</dbReference>
<dbReference type="Pfam" id="PF00378">
    <property type="entry name" value="ECH_1"/>
    <property type="match status" value="1"/>
</dbReference>
<dbReference type="SUPFAM" id="SSF52096">
    <property type="entry name" value="ClpP/crotonase"/>
    <property type="match status" value="1"/>
</dbReference>
<dbReference type="PROSITE" id="PS00166">
    <property type="entry name" value="ENOYL_COA_HYDRATASE"/>
    <property type="match status" value="1"/>
</dbReference>
<proteinExistence type="inferred from homology"/>
<comment type="function">
    <text evidence="1">Catalyzes the reversible dehydration of L-carnitinyl-CoA to crotonobetainyl-CoA.</text>
</comment>
<comment type="catalytic activity">
    <reaction evidence="1">
        <text>(R)-carnitinyl-CoA = crotonobetainyl-CoA + H2O</text>
        <dbReference type="Rhea" id="RHEA:28338"/>
        <dbReference type="ChEBI" id="CHEBI:15377"/>
        <dbReference type="ChEBI" id="CHEBI:60932"/>
        <dbReference type="ChEBI" id="CHEBI:60933"/>
        <dbReference type="EC" id="4.2.1.149"/>
    </reaction>
</comment>
<comment type="pathway">
    <text evidence="1">Amine and polyamine metabolism; carnitine metabolism.</text>
</comment>
<comment type="similarity">
    <text evidence="1">Belongs to the enoyl-CoA hydratase/isomerase family.</text>
</comment>
<keyword id="KW-0456">Lyase</keyword>
<keyword id="KW-1185">Reference proteome</keyword>
<accession>B4EY26</accession>
<reference key="1">
    <citation type="journal article" date="2008" name="J. Bacteriol.">
        <title>Complete genome sequence of uropathogenic Proteus mirabilis, a master of both adherence and motility.</title>
        <authorList>
            <person name="Pearson M.M."/>
            <person name="Sebaihia M."/>
            <person name="Churcher C."/>
            <person name="Quail M.A."/>
            <person name="Seshasayee A.S."/>
            <person name="Luscombe N.M."/>
            <person name="Abdellah Z."/>
            <person name="Arrosmith C."/>
            <person name="Atkin B."/>
            <person name="Chillingworth T."/>
            <person name="Hauser H."/>
            <person name="Jagels K."/>
            <person name="Moule S."/>
            <person name="Mungall K."/>
            <person name="Norbertczak H."/>
            <person name="Rabbinowitsch E."/>
            <person name="Walker D."/>
            <person name="Whithead S."/>
            <person name="Thomson N.R."/>
            <person name="Rather P.N."/>
            <person name="Parkhill J."/>
            <person name="Mobley H.L.T."/>
        </authorList>
    </citation>
    <scope>NUCLEOTIDE SEQUENCE [LARGE SCALE GENOMIC DNA]</scope>
    <source>
        <strain>HI4320</strain>
    </source>
</reference>
<sequence>MSQSLHLTTRGSVLEIILDRPKANAIDAKTSHEMGEVFMRFRDDPSLRVAIITGAGERFFCAGWDLKAAAEGEAPDADFGAGGFAGLTELFDLNKPVIAAINGYAFGGGFELALAADMIICSDNASFALPEAQLGIVPDSGGVLRLPKRLPPAIVNEMLMTGRRMNAQEALRWGIANRVVSATELMDSARELADQIANSAPLAVAALKEIYRATSELSIEEGYKLMRSGVLKYYPRVLHSEDALEGPLAFAEKRSPEWKGR</sequence>
<feature type="chain" id="PRO_1000136259" description="Carnitinyl-CoA dehydratase">
    <location>
        <begin position="1"/>
        <end position="261"/>
    </location>
</feature>
<feature type="active site" description="Nucleophile" evidence="1">
    <location>
        <position position="111"/>
    </location>
</feature>
<feature type="active site" description="Proton acceptor" evidence="1">
    <location>
        <position position="131"/>
    </location>
</feature>